<protein>
    <recommendedName>
        <fullName>Pectate lyase 1</fullName>
        <ecNumber>4.2.2.2</ecNumber>
    </recommendedName>
    <alternativeName>
        <fullName>Allergen Cry j I</fullName>
    </alternativeName>
    <alternativeName>
        <fullName>Major allergen Cry j 1</fullName>
    </alternativeName>
    <alternativeName>
        <fullName>Sugi basic protein</fullName>
        <shortName>SBP</shortName>
    </alternativeName>
    <allergenName>Cry j 1</allergenName>
</protein>
<comment type="function">
    <text evidence="4">Has pectate lyase activity.</text>
</comment>
<comment type="catalytic activity">
    <reaction evidence="4">
        <text>Eliminative cleavage of (1-&gt;4)-alpha-D-galacturonan to give oligosaccharides with 4-deoxy-alpha-D-galact-4-enuronosyl groups at their non-reducing ends.</text>
        <dbReference type="EC" id="4.2.2.2"/>
    </reaction>
</comment>
<comment type="cofactor">
    <cofactor evidence="4">
        <name>Ca(2+)</name>
        <dbReference type="ChEBI" id="CHEBI:29108"/>
    </cofactor>
    <text evidence="4">Binds 1 Ca(2+) ion.</text>
</comment>
<comment type="biophysicochemical properties">
    <phDependence>
        <text evidence="4">Optimum pH is 10.</text>
    </phDependence>
    <temperatureDependence>
        <text evidence="4">Optimum temperature is 60-70 degrees Celsius.</text>
    </temperatureDependence>
</comment>
<comment type="pathway">
    <text>Glycan metabolism; pectin degradation; 2-dehydro-3-deoxy-D-gluconate from pectin: step 2/5.</text>
</comment>
<comment type="PTM">
    <text evidence="5">N-glycosylated; contains fucose and xylose.</text>
</comment>
<comment type="allergen">
    <text>Causes an allergic reaction in human. This is one of the major allergens of Japanese cedar pollen, the most common pollen allergen in Japan.</text>
</comment>
<comment type="similarity">
    <text evidence="6">Belongs to the polysaccharide lyase 1 family. Amb a subfamily.</text>
</comment>
<accession>P18632</accession>
<accession>Q8RUR1</accession>
<name>PLY1_CRYJA</name>
<keyword id="KW-0020">Allergen</keyword>
<keyword id="KW-0106">Calcium</keyword>
<keyword id="KW-0903">Direct protein sequencing</keyword>
<keyword id="KW-1015">Disulfide bond</keyword>
<keyword id="KW-0325">Glycoprotein</keyword>
<keyword id="KW-0456">Lyase</keyword>
<keyword id="KW-0479">Metal-binding</keyword>
<keyword id="KW-0732">Signal</keyword>
<reference key="1">
    <citation type="journal article" date="1994" name="Biochem. Biophys. Res. Commun.">
        <title>Cloning and sequencing of cDNA coding for Cry j I, a major allergen of Japanese cedar pollen.</title>
        <authorList>
            <person name="Sone T."/>
            <person name="Komiyama N."/>
            <person name="Shimizu K."/>
            <person name="Kusakabe T."/>
            <person name="Morikubo K."/>
            <person name="Kino K."/>
        </authorList>
    </citation>
    <scope>NUCLEOTIDE SEQUENCE [MRNA]</scope>
    <scope>PARTIAL PROTEIN SEQUENCE</scope>
    <source>
        <tissue>Pollen</tissue>
    </source>
</reference>
<reference key="2">
    <citation type="submission" date="1994-07" db="EMBL/GenBank/DDBJ databases">
        <authorList>
            <person name="Namba M."/>
            <person name="Kurose M."/>
            <person name="Torigoe K."/>
            <person name="Fukuda S."/>
            <person name="Kurimoto M."/>
        </authorList>
    </citation>
    <scope>NUCLEOTIDE SEQUENCE [MRNA]</scope>
    <source>
        <tissue>Pollen</tissue>
    </source>
</reference>
<reference key="3">
    <citation type="submission" date="2002-03" db="EMBL/GenBank/DDBJ databases">
        <title>Isolation and characterization of cDNAs encoding major allergen Cry j 1 from Cryptomeria japonica pollen.</title>
        <authorList>
            <person name="Futamura N."/>
            <person name="Shinohara K."/>
        </authorList>
    </citation>
    <scope>NUCLEOTIDE SEQUENCE [MRNA]</scope>
    <source>
        <tissue>Pollen</tissue>
    </source>
</reference>
<reference key="4">
    <citation type="journal article" date="1988" name="FEBS Lett.">
        <title>N-terminal amino acid sequence of a major allergen of Japanese cedar pollen (Cry j I).</title>
        <authorList>
            <person name="Taniai M."/>
            <person name="Ando S."/>
            <person name="Usui M."/>
            <person name="Kurimoto M."/>
            <person name="Sakaguchi M."/>
            <person name="Inouye S."/>
            <person name="Matuhasi T."/>
        </authorList>
    </citation>
    <scope>PROTEIN SEQUENCE OF 22-41</scope>
    <source>
        <tissue>Pollen</tissue>
    </source>
</reference>
<reference key="5">
    <citation type="journal article" date="1995" name="Allergy">
        <title>Cry j I, a major allergen of Japanese cedar pollen, has pectate lyase enzyme activity.</title>
        <authorList>
            <person name="Taniguchi Y."/>
            <person name="Ono A."/>
            <person name="Sawatani M."/>
            <person name="Nanba M."/>
            <person name="Kohno K."/>
            <person name="Usui M."/>
            <person name="Kurimoto M."/>
            <person name="Matuhasi T."/>
        </authorList>
    </citation>
    <scope>PROTEIN SEQUENCE OF 250-266</scope>
    <scope>FUNCTION AS A PECTATE LYASE</scope>
    <scope>CATALYTIC ACTIVITY</scope>
    <scope>COFACTOR</scope>
    <scope>BIOPHYSICOCHEMICAL PROPERTIES</scope>
    <source>
        <tissue>Pollen</tissue>
    </source>
</reference>
<reference key="6">
    <citation type="journal article" date="1994" name="Int. Arch. Allergy Immunol.">
        <title>Antigenicity of the oligosaccharide moiety of the Japanese cedar (Cryptomeria japonica) pollen allergen, Cry jI.</title>
        <authorList>
            <person name="Hijikata A."/>
            <person name="Matsumoto I."/>
            <person name="Kojima K."/>
            <person name="Ogawa H."/>
        </authorList>
    </citation>
    <scope>GLYCOSYLATION AT ASN-191 AND ASN-354</scope>
    <source>
        <tissue>Pollen</tissue>
    </source>
</reference>
<reference key="7">
    <citation type="journal article" date="1995" name="J. Biochem.">
        <title>Carbohydrate structures of the glycoprotein allergen Cry j I from Japanese cedar (Cryptomeria japonica) pollen.</title>
        <authorList>
            <person name="Hino K."/>
            <person name="Yamamoto S."/>
            <person name="Sano O."/>
            <person name="Taniguchi Y."/>
            <person name="Kohno K."/>
            <person name="Usui M."/>
            <person name="Fukuda S."/>
            <person name="Hanzawa H."/>
            <person name="Haruyama H."/>
            <person name="Kurimoto M."/>
        </authorList>
    </citation>
    <scope>STRUCTURE OF CARBOHYDRATES</scope>
    <source>
        <tissue>Pollen</tissue>
    </source>
</reference>
<sequence length="374" mass="40720">MDSPCLVALLVFSFVIGSCFSDNPIDSCWRGDSNWAQNRMKLADCAVGFGSSTMGGKGGDLYTVTNSDDDPVNPAPGTLRYGATRDRPLWIIFSGNMNIKLKMPMYIAGYKTFDGRGAQVYIGNGGPCVFIKRVSNVIIHGLYLYGCSTSVLGNVLINESFGVEPVHPQDGDALTLRTATNIWIDHNSFSNSSDGLVDVTLTSTGVTISNNLFFNHHKVMLLGHDDAYSDDKSMKVTVAFNQFGPNCGQRMPRARYGLVHVANNNYDPWTIYAIGGSSNPTILSEGNSFTAPNESYKKQVTIRIGCKTSSSCSNWVWQSTQDVFYNGAYFVSSGKYEGGNIYTKKEAFNVENGNATPQLTKNAGVLTCSLSKRC</sequence>
<dbReference type="EC" id="4.2.2.2"/>
<dbReference type="EMBL" id="D26544">
    <property type="protein sequence ID" value="BAA05542.1"/>
    <property type="molecule type" value="mRNA"/>
</dbReference>
<dbReference type="EMBL" id="D26545">
    <property type="protein sequence ID" value="BAA05543.1"/>
    <property type="molecule type" value="mRNA"/>
</dbReference>
<dbReference type="EMBL" id="D34639">
    <property type="protein sequence ID" value="BAA07020.1"/>
    <property type="molecule type" value="mRNA"/>
</dbReference>
<dbReference type="EMBL" id="AB081309">
    <property type="protein sequence ID" value="BAB86286.1"/>
    <property type="molecule type" value="mRNA"/>
</dbReference>
<dbReference type="EMBL" id="AB081310">
    <property type="protein sequence ID" value="BAB86287.1"/>
    <property type="molecule type" value="mRNA"/>
</dbReference>
<dbReference type="PIR" id="A44773">
    <property type="entry name" value="A44773"/>
</dbReference>
<dbReference type="PIR" id="JC2123">
    <property type="entry name" value="JC2123"/>
</dbReference>
<dbReference type="PIR" id="JC2124">
    <property type="entry name" value="JC2124"/>
</dbReference>
<dbReference type="SMR" id="P18632"/>
<dbReference type="Allergome" id="248">
    <property type="allergen name" value="Cry j 1"/>
</dbReference>
<dbReference type="Allergome" id="3223">
    <property type="allergen name" value="Cry j 1.0101"/>
</dbReference>
<dbReference type="Allergome" id="3224">
    <property type="allergen name" value="Cry j 1.0102"/>
</dbReference>
<dbReference type="Allergome" id="3225">
    <property type="allergen name" value="Cry j 1.0103"/>
</dbReference>
<dbReference type="CAZy" id="PL1">
    <property type="family name" value="Polysaccharide Lyase Family 1"/>
</dbReference>
<dbReference type="GlyConnect" id="580">
    <property type="glycosylation" value="4 N-Linked glycans (2 sites)"/>
</dbReference>
<dbReference type="UniPathway" id="UPA00545">
    <property type="reaction ID" value="UER00824"/>
</dbReference>
<dbReference type="GO" id="GO:0046872">
    <property type="term" value="F:metal ion binding"/>
    <property type="evidence" value="ECO:0007669"/>
    <property type="project" value="UniProtKB-KW"/>
</dbReference>
<dbReference type="GO" id="GO:0030570">
    <property type="term" value="F:pectate lyase activity"/>
    <property type="evidence" value="ECO:0007669"/>
    <property type="project" value="UniProtKB-EC"/>
</dbReference>
<dbReference type="GO" id="GO:0045490">
    <property type="term" value="P:pectin catabolic process"/>
    <property type="evidence" value="ECO:0007669"/>
    <property type="project" value="UniProtKB-UniPathway"/>
</dbReference>
<dbReference type="Gene3D" id="2.160.20.10">
    <property type="entry name" value="Single-stranded right-handed beta-helix, Pectin lyase-like"/>
    <property type="match status" value="1"/>
</dbReference>
<dbReference type="InterPro" id="IPR018082">
    <property type="entry name" value="AmbAllergen"/>
</dbReference>
<dbReference type="InterPro" id="IPR002022">
    <property type="entry name" value="Pec_lyase"/>
</dbReference>
<dbReference type="InterPro" id="IPR012334">
    <property type="entry name" value="Pectin_lyas_fold"/>
</dbReference>
<dbReference type="InterPro" id="IPR011050">
    <property type="entry name" value="Pectin_lyase_fold/virulence"/>
</dbReference>
<dbReference type="InterPro" id="IPR045032">
    <property type="entry name" value="PEL"/>
</dbReference>
<dbReference type="PANTHER" id="PTHR31683:SF80">
    <property type="entry name" value="PECTATE LYASE 16-RELATED"/>
    <property type="match status" value="1"/>
</dbReference>
<dbReference type="PANTHER" id="PTHR31683">
    <property type="entry name" value="PECTATE LYASE 18-RELATED"/>
    <property type="match status" value="1"/>
</dbReference>
<dbReference type="Pfam" id="PF00544">
    <property type="entry name" value="Pectate_lyase_4"/>
    <property type="match status" value="1"/>
</dbReference>
<dbReference type="PRINTS" id="PR00807">
    <property type="entry name" value="AMBALLERGEN"/>
</dbReference>
<dbReference type="SMART" id="SM00656">
    <property type="entry name" value="Amb_all"/>
    <property type="match status" value="1"/>
</dbReference>
<dbReference type="SUPFAM" id="SSF51126">
    <property type="entry name" value="Pectin lyase-like"/>
    <property type="match status" value="1"/>
</dbReference>
<feature type="signal peptide" evidence="3">
    <location>
        <begin position="1"/>
        <end position="21"/>
    </location>
</feature>
<feature type="chain" id="PRO_0000024906" description="Pectate lyase 1">
    <location>
        <begin position="22"/>
        <end position="374"/>
    </location>
</feature>
<feature type="active site" evidence="2">
    <location>
        <position position="250"/>
    </location>
</feature>
<feature type="binding site" evidence="1">
    <location>
        <position position="170"/>
    </location>
    <ligand>
        <name>Ca(2+)</name>
        <dbReference type="ChEBI" id="CHEBI:29108"/>
    </ligand>
</feature>
<feature type="binding site" evidence="1">
    <location>
        <position position="194"/>
    </location>
    <ligand>
        <name>Ca(2+)</name>
        <dbReference type="ChEBI" id="CHEBI:29108"/>
    </ligand>
</feature>
<feature type="binding site" evidence="1">
    <location>
        <position position="198"/>
    </location>
    <ligand>
        <name>Ca(2+)</name>
        <dbReference type="ChEBI" id="CHEBI:29108"/>
    </ligand>
</feature>
<feature type="glycosylation site" description="N-linked (GlcNAc...) asparagine" evidence="2">
    <location>
        <position position="158"/>
    </location>
</feature>
<feature type="glycosylation site" id="CAR_000135" description="N-linked (GlcNAc...) (complex) asparagine" evidence="5">
    <location>
        <position position="191"/>
    </location>
</feature>
<feature type="glycosylation site" description="N-linked (GlcNAc...) asparagine" evidence="2">
    <location>
        <position position="293"/>
    </location>
</feature>
<feature type="glycosylation site" id="CAR_000136" description="N-linked (GlcNAc...) (complex) asparagine" evidence="5">
    <location>
        <position position="354"/>
    </location>
</feature>
<feature type="disulfide bond" evidence="1">
    <location>
        <begin position="28"/>
        <end position="45"/>
    </location>
</feature>
<feature type="disulfide bond" evidence="1">
    <location>
        <begin position="128"/>
        <end position="147"/>
    </location>
</feature>
<feature type="disulfide bond" evidence="1">
    <location>
        <begin position="306"/>
        <end position="312"/>
    </location>
</feature>
<feature type="sequence conflict" description="In Ref. 1; BAA05542." evidence="6" ref="1">
    <original>F</original>
    <variation>L</variation>
    <location>
        <position position="12"/>
    </location>
</feature>
<feature type="sequence conflict" description="In Ref. 1; BAA05542." evidence="6" ref="1">
    <original>Y</original>
    <variation>H</variation>
    <location>
        <position position="143"/>
    </location>
</feature>
<feature type="sequence conflict" description="In Ref. 1; BAA05542." evidence="6" ref="1">
    <original>T</original>
    <variation>S</variation>
    <location>
        <position position="202"/>
    </location>
</feature>
<feature type="sequence conflict" description="In Ref. 1; BAA05543." evidence="6" ref="1">
    <original>L</original>
    <variation>S</variation>
    <location>
        <position position="221"/>
    </location>
</feature>
<feature type="sequence conflict" description="In Ref. 1; BAA05543." evidence="6" ref="1">
    <original>Q</original>
    <variation>H</variation>
    <location>
        <position position="358"/>
    </location>
</feature>
<feature type="sequence conflict" description="In Ref. 1; BAA05543." evidence="6" ref="1">
    <original>K</original>
    <variation>Q</variation>
    <location>
        <position position="361"/>
    </location>
</feature>
<organism>
    <name type="scientific">Cryptomeria japonica</name>
    <name type="common">Japanese cedar</name>
    <name type="synonym">Cupressus japonica</name>
    <dbReference type="NCBI Taxonomy" id="3369"/>
    <lineage>
        <taxon>Eukaryota</taxon>
        <taxon>Viridiplantae</taxon>
        <taxon>Streptophyta</taxon>
        <taxon>Embryophyta</taxon>
        <taxon>Tracheophyta</taxon>
        <taxon>Spermatophyta</taxon>
        <taxon>Pinopsida</taxon>
        <taxon>Pinidae</taxon>
        <taxon>Conifers II</taxon>
        <taxon>Cupressales</taxon>
        <taxon>Cupressaceae</taxon>
        <taxon>Cryptomeria</taxon>
    </lineage>
</organism>
<evidence type="ECO:0000250" key="1"/>
<evidence type="ECO:0000255" key="2"/>
<evidence type="ECO:0000269" key="3">
    <source>
    </source>
</evidence>
<evidence type="ECO:0000269" key="4">
    <source>
    </source>
</evidence>
<evidence type="ECO:0000269" key="5">
    <source>
    </source>
</evidence>
<evidence type="ECO:0000305" key="6"/>
<proteinExistence type="evidence at protein level"/>